<accession>A1VN40</accession>
<reference key="1">
    <citation type="journal article" date="2009" name="Environ. Microbiol.">
        <title>The genome of Polaromonas naphthalenivorans strain CJ2, isolated from coal tar-contaminated sediment, reveals physiological and metabolic versatility and evolution through extensive horizontal gene transfer.</title>
        <authorList>
            <person name="Yagi J.M."/>
            <person name="Sims D."/>
            <person name="Brettin T."/>
            <person name="Bruce D."/>
            <person name="Madsen E.L."/>
        </authorList>
    </citation>
    <scope>NUCLEOTIDE SEQUENCE [LARGE SCALE GENOMIC DNA]</scope>
    <source>
        <strain>CJ2</strain>
    </source>
</reference>
<proteinExistence type="inferred from homology"/>
<comment type="similarity">
    <text evidence="1">Belongs to the universal ribosomal protein uS2 family.</text>
</comment>
<protein>
    <recommendedName>
        <fullName evidence="1">Small ribosomal subunit protein uS2</fullName>
    </recommendedName>
    <alternativeName>
        <fullName evidence="2">30S ribosomal protein S2</fullName>
    </alternativeName>
</protein>
<sequence length="250" mass="27600">MSTNMREMLEAGVHFGHQTRFWDPKMAPYIFGHRNRIHIINLEKSLPMFQEAMKFAKQLTANRGTILMVGTKRTARETVAAEAQRAGIPYVDQRWLGGMLTNFKTVKTSIKRLKEMKAQQEAGLDSISKKEQLTFKREIEKLEKDIGGIQDMTALPDAIFVIDVGFHKIAILEAKKLGIPLIGVVDTNHSPLGIDYVIPGNDDSSKAVALYARGIADAVIEGRASAMDDVVKAVSAEGSDEFVEVENAAA</sequence>
<gene>
    <name evidence="1" type="primary">rpsB</name>
    <name type="ordered locus">Pnap_1758</name>
</gene>
<evidence type="ECO:0000255" key="1">
    <source>
        <dbReference type="HAMAP-Rule" id="MF_00291"/>
    </source>
</evidence>
<evidence type="ECO:0000305" key="2"/>
<keyword id="KW-1185">Reference proteome</keyword>
<keyword id="KW-0687">Ribonucleoprotein</keyword>
<keyword id="KW-0689">Ribosomal protein</keyword>
<dbReference type="EMBL" id="CP000529">
    <property type="protein sequence ID" value="ABM37068.1"/>
    <property type="molecule type" value="Genomic_DNA"/>
</dbReference>
<dbReference type="RefSeq" id="WP_011801149.1">
    <property type="nucleotide sequence ID" value="NC_008781.1"/>
</dbReference>
<dbReference type="SMR" id="A1VN40"/>
<dbReference type="STRING" id="365044.Pnap_1758"/>
<dbReference type="KEGG" id="pna:Pnap_1758"/>
<dbReference type="eggNOG" id="COG0052">
    <property type="taxonomic scope" value="Bacteria"/>
</dbReference>
<dbReference type="HOGENOM" id="CLU_040318_1_2_4"/>
<dbReference type="OrthoDB" id="9808036at2"/>
<dbReference type="Proteomes" id="UP000000644">
    <property type="component" value="Chromosome"/>
</dbReference>
<dbReference type="GO" id="GO:0022627">
    <property type="term" value="C:cytosolic small ribosomal subunit"/>
    <property type="evidence" value="ECO:0007669"/>
    <property type="project" value="TreeGrafter"/>
</dbReference>
<dbReference type="GO" id="GO:0003735">
    <property type="term" value="F:structural constituent of ribosome"/>
    <property type="evidence" value="ECO:0007669"/>
    <property type="project" value="InterPro"/>
</dbReference>
<dbReference type="GO" id="GO:0006412">
    <property type="term" value="P:translation"/>
    <property type="evidence" value="ECO:0007669"/>
    <property type="project" value="UniProtKB-UniRule"/>
</dbReference>
<dbReference type="CDD" id="cd01425">
    <property type="entry name" value="RPS2"/>
    <property type="match status" value="1"/>
</dbReference>
<dbReference type="FunFam" id="1.10.287.610:FF:000001">
    <property type="entry name" value="30S ribosomal protein S2"/>
    <property type="match status" value="1"/>
</dbReference>
<dbReference type="Gene3D" id="3.40.50.10490">
    <property type="entry name" value="Glucose-6-phosphate isomerase like protein, domain 1"/>
    <property type="match status" value="1"/>
</dbReference>
<dbReference type="Gene3D" id="1.10.287.610">
    <property type="entry name" value="Helix hairpin bin"/>
    <property type="match status" value="1"/>
</dbReference>
<dbReference type="HAMAP" id="MF_00291_B">
    <property type="entry name" value="Ribosomal_uS2_B"/>
    <property type="match status" value="1"/>
</dbReference>
<dbReference type="InterPro" id="IPR001865">
    <property type="entry name" value="Ribosomal_uS2"/>
</dbReference>
<dbReference type="InterPro" id="IPR005706">
    <property type="entry name" value="Ribosomal_uS2_bac/mit/plastid"/>
</dbReference>
<dbReference type="InterPro" id="IPR018130">
    <property type="entry name" value="Ribosomal_uS2_CS"/>
</dbReference>
<dbReference type="InterPro" id="IPR023591">
    <property type="entry name" value="Ribosomal_uS2_flav_dom_sf"/>
</dbReference>
<dbReference type="NCBIfam" id="TIGR01011">
    <property type="entry name" value="rpsB_bact"/>
    <property type="match status" value="1"/>
</dbReference>
<dbReference type="PANTHER" id="PTHR12534">
    <property type="entry name" value="30S RIBOSOMAL PROTEIN S2 PROKARYOTIC AND ORGANELLAR"/>
    <property type="match status" value="1"/>
</dbReference>
<dbReference type="PANTHER" id="PTHR12534:SF0">
    <property type="entry name" value="SMALL RIBOSOMAL SUBUNIT PROTEIN US2M"/>
    <property type="match status" value="1"/>
</dbReference>
<dbReference type="Pfam" id="PF00318">
    <property type="entry name" value="Ribosomal_S2"/>
    <property type="match status" value="1"/>
</dbReference>
<dbReference type="PRINTS" id="PR00395">
    <property type="entry name" value="RIBOSOMALS2"/>
</dbReference>
<dbReference type="SUPFAM" id="SSF52313">
    <property type="entry name" value="Ribosomal protein S2"/>
    <property type="match status" value="1"/>
</dbReference>
<dbReference type="PROSITE" id="PS00962">
    <property type="entry name" value="RIBOSOMAL_S2_1"/>
    <property type="match status" value="1"/>
</dbReference>
<name>RS2_POLNA</name>
<organism>
    <name type="scientific">Polaromonas naphthalenivorans (strain CJ2)</name>
    <dbReference type="NCBI Taxonomy" id="365044"/>
    <lineage>
        <taxon>Bacteria</taxon>
        <taxon>Pseudomonadati</taxon>
        <taxon>Pseudomonadota</taxon>
        <taxon>Betaproteobacteria</taxon>
        <taxon>Burkholderiales</taxon>
        <taxon>Comamonadaceae</taxon>
        <taxon>Polaromonas</taxon>
    </lineage>
</organism>
<feature type="chain" id="PRO_1000004020" description="Small ribosomal subunit protein uS2">
    <location>
        <begin position="1"/>
        <end position="250"/>
    </location>
</feature>